<protein>
    <recommendedName>
        <fullName evidence="1">Ribonuclease Z</fullName>
        <shortName evidence="1">RNase Z</shortName>
        <ecNumber evidence="1">3.1.26.11</ecNumber>
    </recommendedName>
    <alternativeName>
        <fullName evidence="1">tRNA 3 endonuclease</fullName>
    </alternativeName>
    <alternativeName>
        <fullName evidence="1">tRNase Z</fullName>
    </alternativeName>
</protein>
<dbReference type="EC" id="3.1.26.11" evidence="1"/>
<dbReference type="EMBL" id="BA000002">
    <property type="protein sequence ID" value="BAA80840.2"/>
    <property type="molecule type" value="Genomic_DNA"/>
</dbReference>
<dbReference type="PIR" id="C72569">
    <property type="entry name" value="C72569"/>
</dbReference>
<dbReference type="RefSeq" id="WP_010866627.1">
    <property type="nucleotide sequence ID" value="NC_000854.2"/>
</dbReference>
<dbReference type="SMR" id="Q9YAV8"/>
<dbReference type="STRING" id="272557.APE_1836.1"/>
<dbReference type="EnsemblBacteria" id="BAA80840">
    <property type="protein sequence ID" value="BAA80840"/>
    <property type="gene ID" value="APE_1836.1"/>
</dbReference>
<dbReference type="GeneID" id="1446276"/>
<dbReference type="KEGG" id="ape:APE_1836.1"/>
<dbReference type="eggNOG" id="arCOG00501">
    <property type="taxonomic scope" value="Archaea"/>
</dbReference>
<dbReference type="Proteomes" id="UP000002518">
    <property type="component" value="Chromosome"/>
</dbReference>
<dbReference type="GO" id="GO:0042781">
    <property type="term" value="F:3'-tRNA processing endoribonuclease activity"/>
    <property type="evidence" value="ECO:0007669"/>
    <property type="project" value="UniProtKB-UniRule"/>
</dbReference>
<dbReference type="GO" id="GO:0008270">
    <property type="term" value="F:zinc ion binding"/>
    <property type="evidence" value="ECO:0007669"/>
    <property type="project" value="UniProtKB-UniRule"/>
</dbReference>
<dbReference type="CDD" id="cd07717">
    <property type="entry name" value="RNaseZ_ZiPD-like_MBL-fold"/>
    <property type="match status" value="1"/>
</dbReference>
<dbReference type="Gene3D" id="3.60.15.10">
    <property type="entry name" value="Ribonuclease Z/Hydroxyacylglutathione hydrolase-like"/>
    <property type="match status" value="1"/>
</dbReference>
<dbReference type="HAMAP" id="MF_01818">
    <property type="entry name" value="RNase_Z_BN"/>
    <property type="match status" value="1"/>
</dbReference>
<dbReference type="InterPro" id="IPR001279">
    <property type="entry name" value="Metallo-B-lactamas"/>
</dbReference>
<dbReference type="InterPro" id="IPR036866">
    <property type="entry name" value="RibonucZ/Hydroxyglut_hydro"/>
</dbReference>
<dbReference type="InterPro" id="IPR013471">
    <property type="entry name" value="RNase_Z/BN"/>
</dbReference>
<dbReference type="NCBIfam" id="TIGR02651">
    <property type="entry name" value="RNase_Z"/>
    <property type="match status" value="1"/>
</dbReference>
<dbReference type="PANTHER" id="PTHR46018">
    <property type="entry name" value="ZINC PHOSPHODIESTERASE ELAC PROTEIN 1"/>
    <property type="match status" value="1"/>
</dbReference>
<dbReference type="PANTHER" id="PTHR46018:SF2">
    <property type="entry name" value="ZINC PHOSPHODIESTERASE ELAC PROTEIN 1"/>
    <property type="match status" value="1"/>
</dbReference>
<dbReference type="Pfam" id="PF00753">
    <property type="entry name" value="Lactamase_B"/>
    <property type="match status" value="1"/>
</dbReference>
<dbReference type="SUPFAM" id="SSF56281">
    <property type="entry name" value="Metallo-hydrolase/oxidoreductase"/>
    <property type="match status" value="1"/>
</dbReference>
<gene>
    <name evidence="1" type="primary">rnz</name>
    <name type="ordered locus">APE_1836.1</name>
</gene>
<reference key="1">
    <citation type="journal article" date="1999" name="DNA Res.">
        <title>Complete genome sequence of an aerobic hyper-thermophilic crenarchaeon, Aeropyrum pernix K1.</title>
        <authorList>
            <person name="Kawarabayasi Y."/>
            <person name="Hino Y."/>
            <person name="Horikawa H."/>
            <person name="Yamazaki S."/>
            <person name="Haikawa Y."/>
            <person name="Jin-no K."/>
            <person name="Takahashi M."/>
            <person name="Sekine M."/>
            <person name="Baba S."/>
            <person name="Ankai A."/>
            <person name="Kosugi H."/>
            <person name="Hosoyama A."/>
            <person name="Fukui S."/>
            <person name="Nagai Y."/>
            <person name="Nishijima K."/>
            <person name="Nakazawa H."/>
            <person name="Takamiya M."/>
            <person name="Masuda S."/>
            <person name="Funahashi T."/>
            <person name="Tanaka T."/>
            <person name="Kudoh Y."/>
            <person name="Yamazaki J."/>
            <person name="Kushida N."/>
            <person name="Oguchi A."/>
            <person name="Aoki K."/>
            <person name="Kubota K."/>
            <person name="Nakamura Y."/>
            <person name="Nomura N."/>
            <person name="Sako Y."/>
            <person name="Kikuchi H."/>
        </authorList>
    </citation>
    <scope>NUCLEOTIDE SEQUENCE [LARGE SCALE GENOMIC DNA]</scope>
    <source>
        <strain>ATCC 700893 / DSM 11879 / JCM 9820 / NBRC 100138 / K1</strain>
    </source>
</reference>
<accession>Q9YAV8</accession>
<proteinExistence type="inferred from homology"/>
<evidence type="ECO:0000255" key="1">
    <source>
        <dbReference type="HAMAP-Rule" id="MF_01818"/>
    </source>
</evidence>
<sequence length="310" mass="34202">MGRIDITILGSGSAVPSLHRWHPSILVKDWMGNTVLLDAGEGVQIRLRKVGVSPSSIDVLAITHPHGDHINGVAGLLMTMSLQSRRKPLTIISTSESLEFISETLEATRENLGFEVMLVDARESGVLDVGRPSGDRLTIEWERACHNIESLAFKLVWTLRPRIDARILERLDLKAGPWIRELIEKGRAHVEGRIVTLKDISASGERKYSVAYTGDTSPCTRVAKFLHGSDILIHDSTLDSSLAREAAERGHSTSLDAARNALTSGAKLLILFHVSSRYSGYEARLLLKEARRVFPNTVLSWDGMKLSITI</sequence>
<keyword id="KW-0255">Endonuclease</keyword>
<keyword id="KW-0378">Hydrolase</keyword>
<keyword id="KW-0479">Metal-binding</keyword>
<keyword id="KW-0540">Nuclease</keyword>
<keyword id="KW-1185">Reference proteome</keyword>
<keyword id="KW-0819">tRNA processing</keyword>
<keyword id="KW-0862">Zinc</keyword>
<organism>
    <name type="scientific">Aeropyrum pernix (strain ATCC 700893 / DSM 11879 / JCM 9820 / NBRC 100138 / K1)</name>
    <dbReference type="NCBI Taxonomy" id="272557"/>
    <lineage>
        <taxon>Archaea</taxon>
        <taxon>Thermoproteota</taxon>
        <taxon>Thermoprotei</taxon>
        <taxon>Desulfurococcales</taxon>
        <taxon>Desulfurococcaceae</taxon>
        <taxon>Aeropyrum</taxon>
    </lineage>
</organism>
<name>RNZ_AERPE</name>
<feature type="chain" id="PRO_0000155919" description="Ribonuclease Z">
    <location>
        <begin position="1"/>
        <end position="310"/>
    </location>
</feature>
<feature type="active site" description="Proton acceptor" evidence="1">
    <location>
        <position position="68"/>
    </location>
</feature>
<feature type="binding site" evidence="1">
    <location>
        <position position="64"/>
    </location>
    <ligand>
        <name>Zn(2+)</name>
        <dbReference type="ChEBI" id="CHEBI:29105"/>
        <label>1</label>
        <note>catalytic</note>
    </ligand>
</feature>
<feature type="binding site" evidence="1">
    <location>
        <position position="66"/>
    </location>
    <ligand>
        <name>Zn(2+)</name>
        <dbReference type="ChEBI" id="CHEBI:29105"/>
        <label>1</label>
        <note>catalytic</note>
    </ligand>
</feature>
<feature type="binding site" evidence="1">
    <location>
        <position position="68"/>
    </location>
    <ligand>
        <name>Zn(2+)</name>
        <dbReference type="ChEBI" id="CHEBI:29105"/>
        <label>2</label>
        <note>catalytic</note>
    </ligand>
</feature>
<feature type="binding site" evidence="1">
    <location>
        <position position="69"/>
    </location>
    <ligand>
        <name>Zn(2+)</name>
        <dbReference type="ChEBI" id="CHEBI:29105"/>
        <label>2</label>
        <note>catalytic</note>
    </ligand>
</feature>
<feature type="binding site" evidence="1">
    <location>
        <position position="146"/>
    </location>
    <ligand>
        <name>Zn(2+)</name>
        <dbReference type="ChEBI" id="CHEBI:29105"/>
        <label>1</label>
        <note>catalytic</note>
    </ligand>
</feature>
<feature type="binding site" evidence="1">
    <location>
        <position position="215"/>
    </location>
    <ligand>
        <name>Zn(2+)</name>
        <dbReference type="ChEBI" id="CHEBI:29105"/>
        <label>1</label>
        <note>catalytic</note>
    </ligand>
</feature>
<feature type="binding site" evidence="1">
    <location>
        <position position="215"/>
    </location>
    <ligand>
        <name>Zn(2+)</name>
        <dbReference type="ChEBI" id="CHEBI:29105"/>
        <label>2</label>
        <note>catalytic</note>
    </ligand>
</feature>
<feature type="binding site" evidence="1">
    <location>
        <position position="273"/>
    </location>
    <ligand>
        <name>Zn(2+)</name>
        <dbReference type="ChEBI" id="CHEBI:29105"/>
        <label>2</label>
        <note>catalytic</note>
    </ligand>
</feature>
<comment type="function">
    <text evidence="1">Zinc phosphodiesterase, which displays some tRNA 3'-processing endonuclease activity. Probably involved in tRNA maturation, by removing a 3'-trailer from precursor tRNA.</text>
</comment>
<comment type="catalytic activity">
    <reaction evidence="1">
        <text>Endonucleolytic cleavage of RNA, removing extra 3' nucleotides from tRNA precursor, generating 3' termini of tRNAs. A 3'-hydroxy group is left at the tRNA terminus and a 5'-phosphoryl group is left at the trailer molecule.</text>
        <dbReference type="EC" id="3.1.26.11"/>
    </reaction>
</comment>
<comment type="cofactor">
    <cofactor evidence="1">
        <name>Zn(2+)</name>
        <dbReference type="ChEBI" id="CHEBI:29105"/>
    </cofactor>
    <text evidence="1">Binds 2 Zn(2+) ions.</text>
</comment>
<comment type="subunit">
    <text evidence="1">Homodimer.</text>
</comment>
<comment type="similarity">
    <text evidence="1">Belongs to the RNase Z family.</text>
</comment>